<feature type="chain" id="PRO_0000079616" description="Pre-mRNA-splicing factor cwf7">
    <location>
        <begin position="1"/>
        <end position="187"/>
    </location>
</feature>
<feature type="helix" evidence="4">
    <location>
        <begin position="19"/>
        <end position="36"/>
    </location>
</feature>
<feature type="helix" evidence="4">
    <location>
        <begin position="60"/>
        <end position="68"/>
    </location>
</feature>
<feature type="helix" evidence="4">
    <location>
        <begin position="89"/>
        <end position="115"/>
    </location>
</feature>
<feature type="helix" evidence="4">
    <location>
        <begin position="118"/>
        <end position="184"/>
    </location>
</feature>
<proteinExistence type="evidence at protein level"/>
<sequence length="187" mass="21317">MSYNISLDSLPYFESTYNEEDRSAAAQIVEEELKRSGGLLIKQEEQKKKFQSHRLSDRLENAIVAAGKGEKLAAIDVQRYIQLKPPGTRESLLQSAVVWEYQKSRNDNLYLLEKHGEKAFDSSLEALEVQLELLEKELVNTKKLSQGCNRKRKHYQMEVGARLAEAEVKFGQLLQSSIQCRVATLLS</sequence>
<name>SPF27_SCHPO</name>
<organism>
    <name type="scientific">Schizosaccharomyces pombe (strain 972 / ATCC 24843)</name>
    <name type="common">Fission yeast</name>
    <dbReference type="NCBI Taxonomy" id="284812"/>
    <lineage>
        <taxon>Eukaryota</taxon>
        <taxon>Fungi</taxon>
        <taxon>Dikarya</taxon>
        <taxon>Ascomycota</taxon>
        <taxon>Taphrinomycotina</taxon>
        <taxon>Schizosaccharomycetes</taxon>
        <taxon>Schizosaccharomycetales</taxon>
        <taxon>Schizosaccharomycetaceae</taxon>
        <taxon>Schizosaccharomyces</taxon>
    </lineage>
</organism>
<dbReference type="EMBL" id="AF254798">
    <property type="protein sequence ID" value="AAF67744.1"/>
    <property type="molecule type" value="Genomic_DNA"/>
</dbReference>
<dbReference type="EMBL" id="CU329671">
    <property type="protein sequence ID" value="CAB57933.1"/>
    <property type="molecule type" value="Genomic_DNA"/>
</dbReference>
<dbReference type="PIR" id="T40047">
    <property type="entry name" value="T40047"/>
</dbReference>
<dbReference type="RefSeq" id="NP_595665.1">
    <property type="nucleotide sequence ID" value="NM_001021560.2"/>
</dbReference>
<dbReference type="PDB" id="3JB9">
    <property type="method" value="EM"/>
    <property type="resolution" value="3.60 A"/>
    <property type="chains" value="i=1-187"/>
</dbReference>
<dbReference type="PDB" id="9ESH">
    <property type="method" value="EM"/>
    <property type="resolution" value="3.20 A"/>
    <property type="chains" value="Z=1-187"/>
</dbReference>
<dbReference type="PDB" id="9ESI">
    <property type="method" value="EM"/>
    <property type="resolution" value="3.10 A"/>
    <property type="chains" value="Z=1-187"/>
</dbReference>
<dbReference type="PDBsum" id="3JB9"/>
<dbReference type="PDBsum" id="9ESH"/>
<dbReference type="PDBsum" id="9ESI"/>
<dbReference type="EMDB" id="EMD-19941"/>
<dbReference type="EMDB" id="EMD-19942"/>
<dbReference type="SMR" id="Q9USV3"/>
<dbReference type="BioGRID" id="277111">
    <property type="interactions" value="31"/>
</dbReference>
<dbReference type="FunCoup" id="Q9USV3">
    <property type="interactions" value="108"/>
</dbReference>
<dbReference type="IntAct" id="Q9USV3">
    <property type="interactions" value="5"/>
</dbReference>
<dbReference type="STRING" id="284812.Q9USV3"/>
<dbReference type="iPTMnet" id="Q9USV3"/>
<dbReference type="PaxDb" id="4896-SPBC28F2.04c.1"/>
<dbReference type="EnsemblFungi" id="SPBC28F2.04c.1">
    <property type="protein sequence ID" value="SPBC28F2.04c.1:pep"/>
    <property type="gene ID" value="SPBC28F2.04c"/>
</dbReference>
<dbReference type="GeneID" id="2540585"/>
<dbReference type="KEGG" id="spo:2540585"/>
<dbReference type="PomBase" id="SPBC28F2.04c">
    <property type="gene designation" value="cwf7"/>
</dbReference>
<dbReference type="VEuPathDB" id="FungiDB:SPBC28F2.04c"/>
<dbReference type="eggNOG" id="KOG3096">
    <property type="taxonomic scope" value="Eukaryota"/>
</dbReference>
<dbReference type="HOGENOM" id="CLU_1435198_0_0_1"/>
<dbReference type="InParanoid" id="Q9USV3"/>
<dbReference type="OMA" id="IQCRVAT"/>
<dbReference type="PhylomeDB" id="Q9USV3"/>
<dbReference type="Reactome" id="R-SPO-72163">
    <property type="pathway name" value="mRNA Splicing - Major Pathway"/>
</dbReference>
<dbReference type="EvolutionaryTrace" id="Q9USV3"/>
<dbReference type="PRO" id="PR:Q9USV3"/>
<dbReference type="Proteomes" id="UP000002485">
    <property type="component" value="Chromosome II"/>
</dbReference>
<dbReference type="GO" id="GO:0071013">
    <property type="term" value="C:catalytic step 2 spliceosome"/>
    <property type="evidence" value="ECO:0000318"/>
    <property type="project" value="GO_Central"/>
</dbReference>
<dbReference type="GO" id="GO:0005634">
    <property type="term" value="C:nucleus"/>
    <property type="evidence" value="ECO:0007005"/>
    <property type="project" value="PomBase"/>
</dbReference>
<dbReference type="GO" id="GO:0071014">
    <property type="term" value="C:post-mRNA release spliceosomal complex"/>
    <property type="evidence" value="ECO:0000314"/>
    <property type="project" value="PomBase"/>
</dbReference>
<dbReference type="GO" id="GO:0000974">
    <property type="term" value="C:Prp19 complex"/>
    <property type="evidence" value="ECO:0000314"/>
    <property type="project" value="PomBase"/>
</dbReference>
<dbReference type="GO" id="GO:0005681">
    <property type="term" value="C:spliceosomal complex"/>
    <property type="evidence" value="ECO:0000314"/>
    <property type="project" value="PomBase"/>
</dbReference>
<dbReference type="GO" id="GO:0045292">
    <property type="term" value="P:mRNA cis splicing, via spliceosome"/>
    <property type="evidence" value="ECO:0000269"/>
    <property type="project" value="PomBase"/>
</dbReference>
<dbReference type="InterPro" id="IPR008409">
    <property type="entry name" value="SPF27"/>
</dbReference>
<dbReference type="PANTHER" id="PTHR13296">
    <property type="entry name" value="BCAS2 PROTEIN"/>
    <property type="match status" value="1"/>
</dbReference>
<dbReference type="PANTHER" id="PTHR13296:SF0">
    <property type="entry name" value="PRE-MRNA-SPLICING FACTOR SPF27"/>
    <property type="match status" value="1"/>
</dbReference>
<dbReference type="Pfam" id="PF05700">
    <property type="entry name" value="BCAS2"/>
    <property type="match status" value="1"/>
</dbReference>
<gene>
    <name type="primary">cwf7</name>
    <name type="synonym">spf27</name>
    <name type="ORF">SPBC28F2.04c</name>
</gene>
<accession>Q9USV3</accession>
<keyword id="KW-0002">3D-structure</keyword>
<keyword id="KW-0507">mRNA processing</keyword>
<keyword id="KW-0508">mRNA splicing</keyword>
<keyword id="KW-0539">Nucleus</keyword>
<keyword id="KW-1185">Reference proteome</keyword>
<keyword id="KW-0747">Spliceosome</keyword>
<protein>
    <recommendedName>
        <fullName>Pre-mRNA-splicing factor cwf7</fullName>
    </recommendedName>
    <alternativeName>
        <fullName>Complexed with cdc5 protein 7</fullName>
    </alternativeName>
    <alternativeName>
        <fullName>Splicing factor 27</fullName>
    </alternativeName>
</protein>
<comment type="function">
    <text>Involved in mRNA splicing.</text>
</comment>
<comment type="subunit">
    <text evidence="1 2">Belongs to the 40S cdc5-associated complex (or cwf complex), a spliceosome sub-complex reminiscent of a late-stage spliceosome composed of the U2, U5 and U6 snRNAs and at least brr2, cdc5, cwf2/prp3, cwf3/syf1, cwf4/syf3, cwf5/ecm2, spp42/cwf6, cwf7/spf27, cwf8, cwf9, cwf10, cwf11, cwf12, prp45/cwf13, cwf14, cwf15, cwf16, cwf17, cwf18, cwf19, cwf20, cwf21, cwf22, cwf23, cwf24, cwf25, cwf26, cyp7/cwf27, cwf28, cwf29/ist3, lea1, msl1, prp5/cwf1, prp10, prp12/sap130, prp17, prp22, sap61, sap62, sap114, sap145, slu7, smb1, smd1, smd3, smf1, smg1 and syf2.</text>
</comment>
<comment type="interaction">
    <interactant intactId="EBI-538841">
        <id>Q9USV3</id>
    </interactant>
    <interactant intactId="EBI-538771">
        <id>P39964</id>
        <label>cdc5</label>
    </interactant>
    <organismsDiffer>false</organismsDiffer>
    <experiments>4</experiments>
</comment>
<comment type="subcellular location">
    <subcellularLocation>
        <location evidence="3">Nucleus</location>
    </subcellularLocation>
</comment>
<comment type="similarity">
    <text evidence="3">Belongs to the SPF27 family.</text>
</comment>
<evidence type="ECO:0000269" key="1">
    <source>
    </source>
</evidence>
<evidence type="ECO:0000269" key="2">
    <source>
    </source>
</evidence>
<evidence type="ECO:0000305" key="3"/>
<evidence type="ECO:0007829" key="4">
    <source>
        <dbReference type="PDB" id="9ESI"/>
    </source>
</evidence>
<reference key="1">
    <citation type="journal article" date="1999" name="Mol. Cell. Biol.">
        <title>Myb-related fission yeast cdc5p is a component of a 40S snRNP-containing complex and is essential for pre-mRNA splicing.</title>
        <authorList>
            <person name="McDonald W.H."/>
            <person name="Ohi R."/>
            <person name="Smelkova N."/>
            <person name="Frendewey D."/>
            <person name="Gould K.L."/>
        </authorList>
    </citation>
    <scope>NUCLEOTIDE SEQUENCE [GENOMIC DNA]</scope>
    <scope>IDENTIFICATION BY MASS SPECTROMETRY</scope>
    <scope>IDENTIFICATION IN THE 40S CDC5-ASSOCIATED COMPLEX</scope>
</reference>
<reference key="2">
    <citation type="journal article" date="2002" name="Nature">
        <title>The genome sequence of Schizosaccharomyces pombe.</title>
        <authorList>
            <person name="Wood V."/>
            <person name="Gwilliam R."/>
            <person name="Rajandream M.A."/>
            <person name="Lyne M.H."/>
            <person name="Lyne R."/>
            <person name="Stewart A."/>
            <person name="Sgouros J.G."/>
            <person name="Peat N."/>
            <person name="Hayles J."/>
            <person name="Baker S.G."/>
            <person name="Basham D."/>
            <person name="Bowman S."/>
            <person name="Brooks K."/>
            <person name="Brown D."/>
            <person name="Brown S."/>
            <person name="Chillingworth T."/>
            <person name="Churcher C.M."/>
            <person name="Collins M."/>
            <person name="Connor R."/>
            <person name="Cronin A."/>
            <person name="Davis P."/>
            <person name="Feltwell T."/>
            <person name="Fraser A."/>
            <person name="Gentles S."/>
            <person name="Goble A."/>
            <person name="Hamlin N."/>
            <person name="Harris D.E."/>
            <person name="Hidalgo J."/>
            <person name="Hodgson G."/>
            <person name="Holroyd S."/>
            <person name="Hornsby T."/>
            <person name="Howarth S."/>
            <person name="Huckle E.J."/>
            <person name="Hunt S."/>
            <person name="Jagels K."/>
            <person name="James K.D."/>
            <person name="Jones L."/>
            <person name="Jones M."/>
            <person name="Leather S."/>
            <person name="McDonald S."/>
            <person name="McLean J."/>
            <person name="Mooney P."/>
            <person name="Moule S."/>
            <person name="Mungall K.L."/>
            <person name="Murphy L.D."/>
            <person name="Niblett D."/>
            <person name="Odell C."/>
            <person name="Oliver K."/>
            <person name="O'Neil S."/>
            <person name="Pearson D."/>
            <person name="Quail M.A."/>
            <person name="Rabbinowitsch E."/>
            <person name="Rutherford K.M."/>
            <person name="Rutter S."/>
            <person name="Saunders D."/>
            <person name="Seeger K."/>
            <person name="Sharp S."/>
            <person name="Skelton J."/>
            <person name="Simmonds M.N."/>
            <person name="Squares R."/>
            <person name="Squares S."/>
            <person name="Stevens K."/>
            <person name="Taylor K."/>
            <person name="Taylor R.G."/>
            <person name="Tivey A."/>
            <person name="Walsh S.V."/>
            <person name="Warren T."/>
            <person name="Whitehead S."/>
            <person name="Woodward J.R."/>
            <person name="Volckaert G."/>
            <person name="Aert R."/>
            <person name="Robben J."/>
            <person name="Grymonprez B."/>
            <person name="Weltjens I."/>
            <person name="Vanstreels E."/>
            <person name="Rieger M."/>
            <person name="Schaefer M."/>
            <person name="Mueller-Auer S."/>
            <person name="Gabel C."/>
            <person name="Fuchs M."/>
            <person name="Duesterhoeft A."/>
            <person name="Fritzc C."/>
            <person name="Holzer E."/>
            <person name="Moestl D."/>
            <person name="Hilbert H."/>
            <person name="Borzym K."/>
            <person name="Langer I."/>
            <person name="Beck A."/>
            <person name="Lehrach H."/>
            <person name="Reinhardt R."/>
            <person name="Pohl T.M."/>
            <person name="Eger P."/>
            <person name="Zimmermann W."/>
            <person name="Wedler H."/>
            <person name="Wambutt R."/>
            <person name="Purnelle B."/>
            <person name="Goffeau A."/>
            <person name="Cadieu E."/>
            <person name="Dreano S."/>
            <person name="Gloux S."/>
            <person name="Lelaure V."/>
            <person name="Mottier S."/>
            <person name="Galibert F."/>
            <person name="Aves S.J."/>
            <person name="Xiang Z."/>
            <person name="Hunt C."/>
            <person name="Moore K."/>
            <person name="Hurst S.M."/>
            <person name="Lucas M."/>
            <person name="Rochet M."/>
            <person name="Gaillardin C."/>
            <person name="Tallada V.A."/>
            <person name="Garzon A."/>
            <person name="Thode G."/>
            <person name="Daga R.R."/>
            <person name="Cruzado L."/>
            <person name="Jimenez J."/>
            <person name="Sanchez M."/>
            <person name="del Rey F."/>
            <person name="Benito J."/>
            <person name="Dominguez A."/>
            <person name="Revuelta J.L."/>
            <person name="Moreno S."/>
            <person name="Armstrong J."/>
            <person name="Forsburg S.L."/>
            <person name="Cerutti L."/>
            <person name="Lowe T."/>
            <person name="McCombie W.R."/>
            <person name="Paulsen I."/>
            <person name="Potashkin J."/>
            <person name="Shpakovski G.V."/>
            <person name="Ussery D."/>
            <person name="Barrell B.G."/>
            <person name="Nurse P."/>
        </authorList>
    </citation>
    <scope>NUCLEOTIDE SEQUENCE [LARGE SCALE GENOMIC DNA]</scope>
    <source>
        <strain>972 / ATCC 24843</strain>
    </source>
</reference>
<reference key="3">
    <citation type="journal article" date="2002" name="Mol. Cell. Biol.">
        <title>Proteomics analysis reveals stable multiprotein complexes in both fission and budding yeasts containing Myb-related Cdc5p/Cef1p, novel pre-mRNA splicing factors, and snRNAs.</title>
        <authorList>
            <person name="Ohi M.D."/>
            <person name="Link A.J."/>
            <person name="Ren L."/>
            <person name="Jennings J.L."/>
            <person name="McDonald W.H."/>
            <person name="Gould K.L."/>
        </authorList>
    </citation>
    <scope>IDENTIFICATION IN THE CWF COMPLEX</scope>
    <scope>IDENTIFICATION BY MASS SPECTROMETRY</scope>
</reference>